<reference key="1">
    <citation type="submission" date="2005-01" db="EMBL/GenBank/DDBJ databases">
        <title>A superfamily of membrane-associated DHHC type zinc finger proteins.</title>
        <authorList>
            <person name="Huang C.-H."/>
            <person name="Chen Y."/>
            <person name="Ye T."/>
        </authorList>
    </citation>
    <scope>NUCLEOTIDE SEQUENCE [MRNA] (ISOFORM 1)</scope>
</reference>
<reference key="2">
    <citation type="journal article" date="1999" name="Nature">
        <title>The DNA sequence of human chromosome 22.</title>
        <authorList>
            <person name="Dunham I."/>
            <person name="Hunt A.R."/>
            <person name="Collins J.E."/>
            <person name="Bruskiewich R."/>
            <person name="Beare D.M."/>
            <person name="Clamp M."/>
            <person name="Smink L.J."/>
            <person name="Ainscough R."/>
            <person name="Almeida J.P."/>
            <person name="Babbage A.K."/>
            <person name="Bagguley C."/>
            <person name="Bailey J."/>
            <person name="Barlow K.F."/>
            <person name="Bates K.N."/>
            <person name="Beasley O.P."/>
            <person name="Bird C.P."/>
            <person name="Blakey S.E."/>
            <person name="Bridgeman A.M."/>
            <person name="Buck D."/>
            <person name="Burgess J."/>
            <person name="Burrill W.D."/>
            <person name="Burton J."/>
            <person name="Carder C."/>
            <person name="Carter N.P."/>
            <person name="Chen Y."/>
            <person name="Clark G."/>
            <person name="Clegg S.M."/>
            <person name="Cobley V.E."/>
            <person name="Cole C.G."/>
            <person name="Collier R.E."/>
            <person name="Connor R."/>
            <person name="Conroy D."/>
            <person name="Corby N.R."/>
            <person name="Coville G.J."/>
            <person name="Cox A.V."/>
            <person name="Davis J."/>
            <person name="Dawson E."/>
            <person name="Dhami P.D."/>
            <person name="Dockree C."/>
            <person name="Dodsworth S.J."/>
            <person name="Durbin R.M."/>
            <person name="Ellington A.G."/>
            <person name="Evans K.L."/>
            <person name="Fey J.M."/>
            <person name="Fleming K."/>
            <person name="French L."/>
            <person name="Garner A.A."/>
            <person name="Gilbert J.G.R."/>
            <person name="Goward M.E."/>
            <person name="Grafham D.V."/>
            <person name="Griffiths M.N.D."/>
            <person name="Hall C."/>
            <person name="Hall R.E."/>
            <person name="Hall-Tamlyn G."/>
            <person name="Heathcott R.W."/>
            <person name="Ho S."/>
            <person name="Holmes S."/>
            <person name="Hunt S.E."/>
            <person name="Jones M.C."/>
            <person name="Kershaw J."/>
            <person name="Kimberley A.M."/>
            <person name="King A."/>
            <person name="Laird G.K."/>
            <person name="Langford C.F."/>
            <person name="Leversha M.A."/>
            <person name="Lloyd C."/>
            <person name="Lloyd D.M."/>
            <person name="Martyn I.D."/>
            <person name="Mashreghi-Mohammadi M."/>
            <person name="Matthews L.H."/>
            <person name="Mccann O.T."/>
            <person name="Mcclay J."/>
            <person name="Mclaren S."/>
            <person name="McMurray A.A."/>
            <person name="Milne S.A."/>
            <person name="Mortimore B.J."/>
            <person name="Odell C.N."/>
            <person name="Pavitt R."/>
            <person name="Pearce A.V."/>
            <person name="Pearson D."/>
            <person name="Phillimore B.J.C.T."/>
            <person name="Phillips S.H."/>
            <person name="Plumb R.W."/>
            <person name="Ramsay H."/>
            <person name="Ramsey Y."/>
            <person name="Rogers L."/>
            <person name="Ross M.T."/>
            <person name="Scott C.E."/>
            <person name="Sehra H.K."/>
            <person name="Skuce C.D."/>
            <person name="Smalley S."/>
            <person name="Smith M.L."/>
            <person name="Soderlund C."/>
            <person name="Spragon L."/>
            <person name="Steward C.A."/>
            <person name="Sulston J.E."/>
            <person name="Swann R.M."/>
            <person name="Vaudin M."/>
            <person name="Wall M."/>
            <person name="Wallis J.M."/>
            <person name="Whiteley M.N."/>
            <person name="Willey D.L."/>
            <person name="Williams L."/>
            <person name="Williams S.A."/>
            <person name="Williamson H."/>
            <person name="Wilmer T.E."/>
            <person name="Wilming L."/>
            <person name="Wright C.L."/>
            <person name="Hubbard T."/>
            <person name="Bentley D.R."/>
            <person name="Beck S."/>
            <person name="Rogers J."/>
            <person name="Shimizu N."/>
            <person name="Minoshima S."/>
            <person name="Kawasaki K."/>
            <person name="Sasaki T."/>
            <person name="Asakawa S."/>
            <person name="Kudoh J."/>
            <person name="Shintani A."/>
            <person name="Shibuya K."/>
            <person name="Yoshizaki Y."/>
            <person name="Aoki N."/>
            <person name="Mitsuyama S."/>
            <person name="Roe B.A."/>
            <person name="Chen F."/>
            <person name="Chu L."/>
            <person name="Crabtree J."/>
            <person name="Deschamps S."/>
            <person name="Do A."/>
            <person name="Do T."/>
            <person name="Dorman A."/>
            <person name="Fang F."/>
            <person name="Fu Y."/>
            <person name="Hu P."/>
            <person name="Hua A."/>
            <person name="Kenton S."/>
            <person name="Lai H."/>
            <person name="Lao H.I."/>
            <person name="Lewis J."/>
            <person name="Lewis S."/>
            <person name="Lin S.-P."/>
            <person name="Loh P."/>
            <person name="Malaj E."/>
            <person name="Nguyen T."/>
            <person name="Pan H."/>
            <person name="Phan S."/>
            <person name="Qi S."/>
            <person name="Qian Y."/>
            <person name="Ray L."/>
            <person name="Ren Q."/>
            <person name="Shaull S."/>
            <person name="Sloan D."/>
            <person name="Song L."/>
            <person name="Wang Q."/>
            <person name="Wang Y."/>
            <person name="Wang Z."/>
            <person name="White J."/>
            <person name="Willingham D."/>
            <person name="Wu H."/>
            <person name="Yao Z."/>
            <person name="Zhan M."/>
            <person name="Zhang G."/>
            <person name="Chissoe S."/>
            <person name="Murray J."/>
            <person name="Miller N."/>
            <person name="Minx P."/>
            <person name="Fulton R."/>
            <person name="Johnson D."/>
            <person name="Bemis G."/>
            <person name="Bentley D."/>
            <person name="Bradshaw H."/>
            <person name="Bourne S."/>
            <person name="Cordes M."/>
            <person name="Du Z."/>
            <person name="Fulton L."/>
            <person name="Goela D."/>
            <person name="Graves T."/>
            <person name="Hawkins J."/>
            <person name="Hinds K."/>
            <person name="Kemp K."/>
            <person name="Latreille P."/>
            <person name="Layman D."/>
            <person name="Ozersky P."/>
            <person name="Rohlfing T."/>
            <person name="Scheet P."/>
            <person name="Walker C."/>
            <person name="Wamsley A."/>
            <person name="Wohldmann P."/>
            <person name="Pepin K."/>
            <person name="Nelson J."/>
            <person name="Korf I."/>
            <person name="Bedell J.A."/>
            <person name="Hillier L.W."/>
            <person name="Mardis E."/>
            <person name="Waterston R."/>
            <person name="Wilson R."/>
            <person name="Emanuel B.S."/>
            <person name="Shaikh T."/>
            <person name="Kurahashi H."/>
            <person name="Saitta S."/>
            <person name="Budarf M.L."/>
            <person name="McDermid H.E."/>
            <person name="Johnson A."/>
            <person name="Wong A.C.C."/>
            <person name="Morrow B.E."/>
            <person name="Edelmann L."/>
            <person name="Kim U.J."/>
            <person name="Shizuya H."/>
            <person name="Simon M.I."/>
            <person name="Dumanski J.P."/>
            <person name="Peyrard M."/>
            <person name="Kedra D."/>
            <person name="Seroussi E."/>
            <person name="Fransson I."/>
            <person name="Tapia I."/>
            <person name="Bruder C.E."/>
            <person name="O'Brien K.P."/>
            <person name="Wilkinson P."/>
            <person name="Bodenteich A."/>
            <person name="Hartman K."/>
            <person name="Hu X."/>
            <person name="Khan A.S."/>
            <person name="Lane L."/>
            <person name="Tilahun Y."/>
            <person name="Wright H."/>
        </authorList>
    </citation>
    <scope>NUCLEOTIDE SEQUENCE [LARGE SCALE GENOMIC DNA]</scope>
</reference>
<reference key="3">
    <citation type="submission" date="2005-09" db="EMBL/GenBank/DDBJ databases">
        <authorList>
            <person name="Mural R.J."/>
            <person name="Istrail S."/>
            <person name="Sutton G.G."/>
            <person name="Florea L."/>
            <person name="Halpern A.L."/>
            <person name="Mobarry C.M."/>
            <person name="Lippert R."/>
            <person name="Walenz B."/>
            <person name="Shatkay H."/>
            <person name="Dew I."/>
            <person name="Miller J.R."/>
            <person name="Flanigan M.J."/>
            <person name="Edwards N.J."/>
            <person name="Bolanos R."/>
            <person name="Fasulo D."/>
            <person name="Halldorsson B.V."/>
            <person name="Hannenhalli S."/>
            <person name="Turner R."/>
            <person name="Yooseph S."/>
            <person name="Lu F."/>
            <person name="Nusskern D.R."/>
            <person name="Shue B.C."/>
            <person name="Zheng X.H."/>
            <person name="Zhong F."/>
            <person name="Delcher A.L."/>
            <person name="Huson D.H."/>
            <person name="Kravitz S.A."/>
            <person name="Mouchard L."/>
            <person name="Reinert K."/>
            <person name="Remington K.A."/>
            <person name="Clark A.G."/>
            <person name="Waterman M.S."/>
            <person name="Eichler E.E."/>
            <person name="Adams M.D."/>
            <person name="Hunkapiller M.W."/>
            <person name="Myers E.W."/>
            <person name="Venter J.C."/>
        </authorList>
    </citation>
    <scope>NUCLEOTIDE SEQUENCE [LARGE SCALE GENOMIC DNA]</scope>
</reference>
<reference key="4">
    <citation type="journal article" date="2004" name="Genome Res.">
        <title>The status, quality, and expansion of the NIH full-length cDNA project: the Mammalian Gene Collection (MGC).</title>
        <authorList>
            <consortium name="The MGC Project Team"/>
        </authorList>
    </citation>
    <scope>NUCLEOTIDE SEQUENCE [LARGE SCALE MRNA] (ISOFORM 1)</scope>
    <source>
        <tissue>Hippocampus</tissue>
    </source>
</reference>
<reference key="5">
    <citation type="journal article" date="2004" name="Nat. Genet.">
        <title>Complete sequencing and characterization of 21,243 full-length human cDNAs.</title>
        <authorList>
            <person name="Ota T."/>
            <person name="Suzuki Y."/>
            <person name="Nishikawa T."/>
            <person name="Otsuki T."/>
            <person name="Sugiyama T."/>
            <person name="Irie R."/>
            <person name="Wakamatsu A."/>
            <person name="Hayashi K."/>
            <person name="Sato H."/>
            <person name="Nagai K."/>
            <person name="Kimura K."/>
            <person name="Makita H."/>
            <person name="Sekine M."/>
            <person name="Obayashi M."/>
            <person name="Nishi T."/>
            <person name="Shibahara T."/>
            <person name="Tanaka T."/>
            <person name="Ishii S."/>
            <person name="Yamamoto J."/>
            <person name="Saito K."/>
            <person name="Kawai Y."/>
            <person name="Isono Y."/>
            <person name="Nakamura Y."/>
            <person name="Nagahari K."/>
            <person name="Murakami K."/>
            <person name="Yasuda T."/>
            <person name="Iwayanagi T."/>
            <person name="Wagatsuma M."/>
            <person name="Shiratori A."/>
            <person name="Sudo H."/>
            <person name="Hosoiri T."/>
            <person name="Kaku Y."/>
            <person name="Kodaira H."/>
            <person name="Kondo H."/>
            <person name="Sugawara M."/>
            <person name="Takahashi M."/>
            <person name="Kanda K."/>
            <person name="Yokoi T."/>
            <person name="Furuya T."/>
            <person name="Kikkawa E."/>
            <person name="Omura Y."/>
            <person name="Abe K."/>
            <person name="Kamihara K."/>
            <person name="Katsuta N."/>
            <person name="Sato K."/>
            <person name="Tanikawa M."/>
            <person name="Yamazaki M."/>
            <person name="Ninomiya K."/>
            <person name="Ishibashi T."/>
            <person name="Yamashita H."/>
            <person name="Murakawa K."/>
            <person name="Fujimori K."/>
            <person name="Tanai H."/>
            <person name="Kimata M."/>
            <person name="Watanabe M."/>
            <person name="Hiraoka S."/>
            <person name="Chiba Y."/>
            <person name="Ishida S."/>
            <person name="Ono Y."/>
            <person name="Takiguchi S."/>
            <person name="Watanabe S."/>
            <person name="Yosida M."/>
            <person name="Hotuta T."/>
            <person name="Kusano J."/>
            <person name="Kanehori K."/>
            <person name="Takahashi-Fujii A."/>
            <person name="Hara H."/>
            <person name="Tanase T.-O."/>
            <person name="Nomura Y."/>
            <person name="Togiya S."/>
            <person name="Komai F."/>
            <person name="Hara R."/>
            <person name="Takeuchi K."/>
            <person name="Arita M."/>
            <person name="Imose N."/>
            <person name="Musashino K."/>
            <person name="Yuuki H."/>
            <person name="Oshima A."/>
            <person name="Sasaki N."/>
            <person name="Aotsuka S."/>
            <person name="Yoshikawa Y."/>
            <person name="Matsunawa H."/>
            <person name="Ichihara T."/>
            <person name="Shiohata N."/>
            <person name="Sano S."/>
            <person name="Moriya S."/>
            <person name="Momiyama H."/>
            <person name="Satoh N."/>
            <person name="Takami S."/>
            <person name="Terashima Y."/>
            <person name="Suzuki O."/>
            <person name="Nakagawa S."/>
            <person name="Senoh A."/>
            <person name="Mizoguchi H."/>
            <person name="Goto Y."/>
            <person name="Shimizu F."/>
            <person name="Wakebe H."/>
            <person name="Hishigaki H."/>
            <person name="Watanabe T."/>
            <person name="Sugiyama A."/>
            <person name="Takemoto M."/>
            <person name="Kawakami B."/>
            <person name="Yamazaki M."/>
            <person name="Watanabe K."/>
            <person name="Kumagai A."/>
            <person name="Itakura S."/>
            <person name="Fukuzumi Y."/>
            <person name="Fujimori Y."/>
            <person name="Komiyama M."/>
            <person name="Tashiro H."/>
            <person name="Tanigami A."/>
            <person name="Fujiwara T."/>
            <person name="Ono T."/>
            <person name="Yamada K."/>
            <person name="Fujii Y."/>
            <person name="Ozaki K."/>
            <person name="Hirao M."/>
            <person name="Ohmori Y."/>
            <person name="Kawabata A."/>
            <person name="Hikiji T."/>
            <person name="Kobatake N."/>
            <person name="Inagaki H."/>
            <person name="Ikema Y."/>
            <person name="Okamoto S."/>
            <person name="Okitani R."/>
            <person name="Kawakami T."/>
            <person name="Noguchi S."/>
            <person name="Itoh T."/>
            <person name="Shigeta K."/>
            <person name="Senba T."/>
            <person name="Matsumura K."/>
            <person name="Nakajima Y."/>
            <person name="Mizuno T."/>
            <person name="Morinaga M."/>
            <person name="Sasaki M."/>
            <person name="Togashi T."/>
            <person name="Oyama M."/>
            <person name="Hata H."/>
            <person name="Watanabe M."/>
            <person name="Komatsu T."/>
            <person name="Mizushima-Sugano J."/>
            <person name="Satoh T."/>
            <person name="Shirai Y."/>
            <person name="Takahashi Y."/>
            <person name="Nakagawa K."/>
            <person name="Okumura K."/>
            <person name="Nagase T."/>
            <person name="Nomura N."/>
            <person name="Kikuchi H."/>
            <person name="Masuho Y."/>
            <person name="Yamashita R."/>
            <person name="Nakai K."/>
            <person name="Yada T."/>
            <person name="Nakamura Y."/>
            <person name="Ohara O."/>
            <person name="Isogai T."/>
            <person name="Sugano S."/>
        </authorList>
    </citation>
    <scope>NUCLEOTIDE SEQUENCE [LARGE SCALE MRNA] OF 15-765 (ISOFORM 3)</scope>
    <source>
        <tissue>Amygdala</tissue>
    </source>
</reference>
<reference key="6">
    <citation type="journal article" date="2004" name="Genome Biol.">
        <title>A genome annotation-driven approach to cloning the human ORFeome.</title>
        <authorList>
            <person name="Collins J.E."/>
            <person name="Wright C.L."/>
            <person name="Edwards C.A."/>
            <person name="Davis M.P."/>
            <person name="Grinham J.A."/>
            <person name="Cole C.G."/>
            <person name="Goward M.E."/>
            <person name="Aguado B."/>
            <person name="Mallya M."/>
            <person name="Mokrab Y."/>
            <person name="Huckle E.J."/>
            <person name="Beare D.M."/>
            <person name="Dunham I."/>
        </authorList>
    </citation>
    <scope>NUCLEOTIDE SEQUENCE [LARGE SCALE MRNA] OF 47-765 (ISOFORM 1)</scope>
</reference>
<reference key="7">
    <citation type="journal article" date="1999" name="DNA Res.">
        <title>Prediction of the coding sequences of unidentified human genes. XV. The complete sequences of 100 new cDNA clones from brain which code for large proteins in vitro.</title>
        <authorList>
            <person name="Nagase T."/>
            <person name="Ishikawa K."/>
            <person name="Kikuno R."/>
            <person name="Hirosawa M."/>
            <person name="Nomura N."/>
            <person name="Ohara O."/>
        </authorList>
    </citation>
    <scope>NUCLEOTIDE SEQUENCE [LARGE SCALE MRNA] OF 79-673 (ISOFORM 2)</scope>
    <source>
        <tissue>Brain</tissue>
    </source>
</reference>
<reference key="8">
    <citation type="journal article" date="2004" name="Hum. Mol. Genet.">
        <title>Case-control study and transmission disequilibrium test provide consistent evidence for association between schizophrenia and genetic variation in the 22q11 gene ZDHHC8.</title>
        <authorList>
            <person name="Chen W.-Y."/>
            <person name="Shi Y.-Y."/>
            <person name="Zheng Y.-L."/>
            <person name="Zhao X.-Z."/>
            <person name="Zhang G.-J."/>
            <person name="Chen S.-Q."/>
            <person name="Yang P.-D."/>
            <person name="He L."/>
        </authorList>
    </citation>
    <scope>POSSIBLE INVOLVEMENT IN SUSCEPTIBILITY TO SCHIZOPHRENIA</scope>
</reference>
<reference key="9">
    <citation type="journal article" date="2004" name="Nat. Genet.">
        <title>Evidence that the gene encoding ZDHHC8 contributes to the risk of schizophrenia.</title>
        <authorList>
            <person name="Mukai J."/>
            <person name="Liu H."/>
            <person name="Burt R.A."/>
            <person name="Swor D.E."/>
            <person name="Lai W.-S."/>
            <person name="Karayiorgou M."/>
            <person name="Gogos J.A."/>
        </authorList>
    </citation>
    <scope>POSSIBLE INVOLVEMENT IN SUSCEPTIBILITY TO SCHIZOPHRENIA</scope>
    <scope>SUBCELLULAR LOCATION</scope>
</reference>
<reference key="10">
    <citation type="journal article" date="2005" name="Biol. Psychiatry">
        <title>No association between the putative functional ZDHHC8 single nucleotide polymorphism rs175174 and schizophrenia in large European samples.</title>
        <authorList>
            <person name="Glaser B."/>
            <person name="Schumacher J."/>
            <person name="Williams H.J."/>
            <person name="Jamra R.A."/>
            <person name="Ianakiev N."/>
            <person name="Milev R."/>
            <person name="Ohlraun S."/>
            <person name="Schulze T.G."/>
            <person name="Czerski P.M."/>
            <person name="Hauser J."/>
            <person name="Joensson E.G."/>
            <person name="Sedvall G.C."/>
            <person name="Klopp N."/>
            <person name="Illig T."/>
            <person name="Becker T."/>
            <person name="Propping P."/>
            <person name="Williams N.M."/>
            <person name="Cichon S."/>
            <person name="Kirov G."/>
            <person name="Rietschel M."/>
            <person name="Murphy K.C."/>
            <person name="O'Donovan M.C."/>
            <person name="Noethen M.M."/>
            <person name="Owen M.J."/>
        </authorList>
    </citation>
    <scope>ABSENCE OF INVOLVEMENT IN SUSCEPTIBILITY TO SCHIZOPHRENIA</scope>
</reference>
<reference key="11">
    <citation type="journal article" date="2005" name="Neurosci. Lett.">
        <title>No association was found between a functional SNP in ZDHHC8 and schizophrenia in a Japanese case-control population.</title>
        <authorList>
            <person name="Saito S."/>
            <person name="Ikeda M."/>
            <person name="Iwata N."/>
            <person name="Suzuki T."/>
            <person name="Kitajima T."/>
            <person name="Yamanouchi Y."/>
            <person name="Kinoshita Y."/>
            <person name="Takahashi N."/>
            <person name="Inada T."/>
            <person name="Ozaki N."/>
        </authorList>
    </citation>
    <scope>ABSENCE OF INVOLVEMENT IN SUSCEPTIBILITY TO SCHIZOPHRENIA</scope>
</reference>
<reference key="12">
    <citation type="journal article" date="2005" name="Neurosci. Lett.">
        <title>The ZDHHC8 gene did not associate with bipolar disorder or schizophrenia.</title>
        <authorList>
            <person name="Otani K."/>
            <person name="Ujike H."/>
            <person name="Tanaka Y."/>
            <person name="Morita Y."/>
            <person name="Kishimoto M."/>
            <person name="Morio A."/>
            <person name="Uchida N."/>
            <person name="Nomura A."/>
            <person name="Kuroda S."/>
        </authorList>
    </citation>
    <scope>ABSENCE OF INVOLVEMENT IN SUSCEPTIBILITY TO SCHIZOPHRENIA</scope>
</reference>
<reference key="13">
    <citation type="journal article" date="2006" name="Biochim. Biophys. Acta">
        <title>Intracellular localization and tissue-specific distribution of human and yeast DHHC cysteine-rich domain-containing proteins.</title>
        <authorList>
            <person name="Ohno Y."/>
            <person name="Kihara A."/>
            <person name="Sano T."/>
            <person name="Igarashi Y."/>
        </authorList>
    </citation>
    <scope>SUBCELLULAR LOCATION</scope>
    <scope>TISSUE SPECIFICITY</scope>
</reference>
<reference key="14">
    <citation type="journal article" date="2008" name="J. Proteome Res.">
        <title>Combining protein-based IMAC, peptide-based IMAC, and MudPIT for efficient phosphoproteomic analysis.</title>
        <authorList>
            <person name="Cantin G.T."/>
            <person name="Yi W."/>
            <person name="Lu B."/>
            <person name="Park S.K."/>
            <person name="Xu T."/>
            <person name="Lee J.-D."/>
            <person name="Yates J.R. III"/>
        </authorList>
    </citation>
    <scope>IDENTIFICATION BY MASS SPECTROMETRY [LARGE SCALE ANALYSIS]</scope>
    <source>
        <tissue>Cervix carcinoma</tissue>
    </source>
</reference>
<reference key="15">
    <citation type="journal article" date="2008" name="J. Proteome Res.">
        <title>Phosphoproteome of resting human platelets.</title>
        <authorList>
            <person name="Zahedi R.P."/>
            <person name="Lewandrowski U."/>
            <person name="Wiesner J."/>
            <person name="Wortelkamp S."/>
            <person name="Moebius J."/>
            <person name="Schuetz C."/>
            <person name="Walter U."/>
            <person name="Gambaryan S."/>
            <person name="Sickmann A."/>
        </authorList>
    </citation>
    <scope>IDENTIFICATION BY MASS SPECTROMETRY [LARGE SCALE ANALYSIS]</scope>
    <source>
        <tissue>Platelet</tissue>
    </source>
</reference>
<reference key="16">
    <citation type="journal article" date="2009" name="Circ. Res.">
        <title>Palmitoylation of ATP-binding cassette transporter A1 is essential for its trafficking and function.</title>
        <authorList>
            <person name="Singaraja R.R."/>
            <person name="Kang M.H."/>
            <person name="Vaid K."/>
            <person name="Sanders S.S."/>
            <person name="Vilas G.L."/>
            <person name="Arstikaitis P."/>
            <person name="Coutinho J."/>
            <person name="Drisdel R.C."/>
            <person name="El-Husseini Ael D."/>
            <person name="Green W.N."/>
            <person name="Berthiaume L."/>
            <person name="Hayden M.R."/>
        </authorList>
    </citation>
    <scope>FUNCTION</scope>
    <scope>CATALYTIC ACTIVITY</scope>
</reference>
<reference key="17">
    <citation type="journal article" date="2012" name="Mol. Biol. Cell">
        <title>Analysis of substrate specificity of human DHHC protein acyltransferases using a yeast expression system.</title>
        <authorList>
            <person name="Ohno Y."/>
            <person name="Kashio A."/>
            <person name="Ogata R."/>
            <person name="Ishitomi A."/>
            <person name="Yamazaki Y."/>
            <person name="Kihara A."/>
        </authorList>
    </citation>
    <scope>FUNCTION</scope>
    <scope>CATALYTIC ACTIVITY</scope>
</reference>
<reference key="18">
    <citation type="journal article" date="2013" name="J. Proteome Res.">
        <title>Toward a comprehensive characterization of a human cancer cell phosphoproteome.</title>
        <authorList>
            <person name="Zhou H."/>
            <person name="Di Palma S."/>
            <person name="Preisinger C."/>
            <person name="Peng M."/>
            <person name="Polat A.N."/>
            <person name="Heck A.J."/>
            <person name="Mohammed S."/>
        </authorList>
    </citation>
    <scope>PHOSPHORYLATION [LARGE SCALE ANALYSIS] AT SER-606; SER-675; SER-682; SER-725 AND SER-743</scope>
    <scope>IDENTIFICATION BY MASS SPECTROMETRY [LARGE SCALE ANALYSIS]</scope>
    <source>
        <tissue>Cervix carcinoma</tissue>
        <tissue>Erythroleukemia</tissue>
    </source>
</reference>
<reference key="19">
    <citation type="journal article" date="2015" name="PLoS ONE">
        <title>Effect of C-Terminal S-Palmitoylation on D2 Dopamine Receptor Trafficking and Stability.</title>
        <authorList>
            <person name="Ebersole B."/>
            <person name="Petko J."/>
            <person name="Woll M."/>
            <person name="Murakami S."/>
            <person name="Sokolina K."/>
            <person name="Wong V."/>
            <person name="Stagljar I."/>
            <person name="Luescher B."/>
            <person name="Levenson R."/>
        </authorList>
    </citation>
    <scope>FUNCTION</scope>
    <scope>SUBCELLULAR LOCATION</scope>
</reference>
<reference key="20">
    <citation type="journal article" date="2021" name="Dev. Cell">
        <title>S-acylation controls SARS-CoV-2 membrane lipid organization and enhances infectivity.</title>
        <authorList>
            <person name="Mesquita F.S."/>
            <person name="Abrami L."/>
            <person name="Sergeeva O."/>
            <person name="Turelli P."/>
            <person name="Qing E."/>
            <person name="Kunz B."/>
            <person name="Raclot C."/>
            <person name="Paz Montoya J."/>
            <person name="Abriata L.A."/>
            <person name="Gallagher T."/>
            <person name="Dal Peraro M."/>
            <person name="Trono D."/>
            <person name="D'Angelo G."/>
            <person name="van der Goot F.G."/>
        </authorList>
    </citation>
    <scope>FUNCTION (MICROBIAL INFECTION)</scope>
    <scope>SUBCELLULAR LOCATION</scope>
    <scope>CATALYTIC ACTIVITY</scope>
</reference>
<keyword id="KW-0012">Acyltransferase</keyword>
<keyword id="KW-0025">Alternative splicing</keyword>
<keyword id="KW-0333">Golgi apparatus</keyword>
<keyword id="KW-0945">Host-virus interaction</keyword>
<keyword id="KW-0449">Lipoprotein</keyword>
<keyword id="KW-0472">Membrane</keyword>
<keyword id="KW-0488">Methylation</keyword>
<keyword id="KW-0496">Mitochondrion</keyword>
<keyword id="KW-0564">Palmitate</keyword>
<keyword id="KW-0597">Phosphoprotein</keyword>
<keyword id="KW-1267">Proteomics identification</keyword>
<keyword id="KW-1185">Reference proteome</keyword>
<keyword id="KW-0808">Transferase</keyword>
<keyword id="KW-0812">Transmembrane</keyword>
<keyword id="KW-1133">Transmembrane helix</keyword>
<evidence type="ECO:0000250" key="1">
    <source>
        <dbReference type="UniProtKB" id="Q5Y5T5"/>
    </source>
</evidence>
<evidence type="ECO:0000250" key="2">
    <source>
        <dbReference type="UniProtKB" id="Q8IUH5"/>
    </source>
</evidence>
<evidence type="ECO:0000255" key="3"/>
<evidence type="ECO:0000255" key="4">
    <source>
        <dbReference type="PROSITE-ProRule" id="PRU00067"/>
    </source>
</evidence>
<evidence type="ECO:0000256" key="5">
    <source>
        <dbReference type="SAM" id="MobiDB-lite"/>
    </source>
</evidence>
<evidence type="ECO:0000269" key="6">
    <source>
    </source>
</evidence>
<evidence type="ECO:0000269" key="7">
    <source>
    </source>
</evidence>
<evidence type="ECO:0000269" key="8">
    <source>
    </source>
</evidence>
<evidence type="ECO:0000269" key="9">
    <source>
    </source>
</evidence>
<evidence type="ECO:0000269" key="10">
    <source>
    </source>
</evidence>
<evidence type="ECO:0000269" key="11">
    <source>
    </source>
</evidence>
<evidence type="ECO:0000269" key="12">
    <source>
    </source>
</evidence>
<evidence type="ECO:0000269" key="13">
    <source>
    </source>
</evidence>
<evidence type="ECO:0000303" key="14">
    <source>
    </source>
</evidence>
<evidence type="ECO:0000303" key="15">
    <source>
    </source>
</evidence>
<evidence type="ECO:0000303" key="16">
    <source>
    </source>
</evidence>
<evidence type="ECO:0000305" key="17"/>
<evidence type="ECO:0000305" key="18">
    <source>
    </source>
</evidence>
<evidence type="ECO:0000305" key="19">
    <source>
    </source>
</evidence>
<evidence type="ECO:0000305" key="20">
    <source>
    </source>
</evidence>
<evidence type="ECO:0000312" key="21">
    <source>
        <dbReference type="EMBL" id="BAA86606.1"/>
    </source>
</evidence>
<evidence type="ECO:0000312" key="22">
    <source>
        <dbReference type="HGNC" id="HGNC:18474"/>
    </source>
</evidence>
<evidence type="ECO:0007744" key="23">
    <source>
    </source>
</evidence>
<dbReference type="EC" id="2.3.1.225" evidence="18 19"/>
<dbReference type="EMBL" id="AY894890">
    <property type="protein sequence ID" value="AAX73369.1"/>
    <property type="molecule type" value="mRNA"/>
</dbReference>
<dbReference type="EMBL" id="AC006547">
    <property type="status" value="NOT_ANNOTATED_CDS"/>
    <property type="molecule type" value="Genomic_DNA"/>
</dbReference>
<dbReference type="EMBL" id="CH471176">
    <property type="protein sequence ID" value="EAX02984.1"/>
    <property type="molecule type" value="Genomic_DNA"/>
</dbReference>
<dbReference type="EMBL" id="BC053544">
    <property type="protein sequence ID" value="AAH53544.1"/>
    <property type="molecule type" value="mRNA"/>
</dbReference>
<dbReference type="EMBL" id="AK131238">
    <property type="protein sequence ID" value="BAD18420.1"/>
    <property type="status" value="ALT_INIT"/>
    <property type="molecule type" value="mRNA"/>
</dbReference>
<dbReference type="EMBL" id="CR456357">
    <property type="protein sequence ID" value="CAG30243.1"/>
    <property type="status" value="ALT_INIT"/>
    <property type="molecule type" value="mRNA"/>
</dbReference>
<dbReference type="EMBL" id="AB033118">
    <property type="protein sequence ID" value="BAA86606.1"/>
    <property type="molecule type" value="mRNA"/>
</dbReference>
<dbReference type="CCDS" id="CCDS13776.1">
    <molecule id="Q9ULC8-1"/>
</dbReference>
<dbReference type="CCDS" id="CCDS54502.1">
    <molecule id="Q9ULC8-3"/>
</dbReference>
<dbReference type="RefSeq" id="NP_001171953.1">
    <molecule id="Q9ULC8-3"/>
    <property type="nucleotide sequence ID" value="NM_001185024.2"/>
</dbReference>
<dbReference type="RefSeq" id="NP_037505.1">
    <molecule id="Q9ULC8-1"/>
    <property type="nucleotide sequence ID" value="NM_013373.4"/>
</dbReference>
<dbReference type="RefSeq" id="XP_006724302.1">
    <molecule id="Q9ULC8-3"/>
    <property type="nucleotide sequence ID" value="XM_006724239.3"/>
</dbReference>
<dbReference type="RefSeq" id="XP_054181567.1">
    <molecule id="Q9ULC8-3"/>
    <property type="nucleotide sequence ID" value="XM_054325592.1"/>
</dbReference>
<dbReference type="SMR" id="Q9ULC8"/>
<dbReference type="BioGRID" id="118925">
    <property type="interactions" value="28"/>
</dbReference>
<dbReference type="FunCoup" id="Q9ULC8">
    <property type="interactions" value="978"/>
</dbReference>
<dbReference type="IntAct" id="Q9ULC8">
    <property type="interactions" value="5"/>
</dbReference>
<dbReference type="MINT" id="Q9ULC8"/>
<dbReference type="STRING" id="9606.ENSP00000384716"/>
<dbReference type="GlyGen" id="Q9ULC8">
    <property type="glycosylation" value="4 sites, 1 O-linked glycan (3 sites)"/>
</dbReference>
<dbReference type="iPTMnet" id="Q9ULC8"/>
<dbReference type="PhosphoSitePlus" id="Q9ULC8"/>
<dbReference type="SwissPalm" id="Q9ULC8"/>
<dbReference type="BioMuta" id="ZDHHC8"/>
<dbReference type="DMDM" id="57015419"/>
<dbReference type="jPOST" id="Q9ULC8"/>
<dbReference type="MassIVE" id="Q9ULC8"/>
<dbReference type="PaxDb" id="9606-ENSP00000384716"/>
<dbReference type="PeptideAtlas" id="Q9ULC8"/>
<dbReference type="ProteomicsDB" id="84983">
    <molecule id="Q9ULC8-1"/>
</dbReference>
<dbReference type="ProteomicsDB" id="84984">
    <molecule id="Q9ULC8-2"/>
</dbReference>
<dbReference type="ProteomicsDB" id="84985">
    <molecule id="Q9ULC8-3"/>
</dbReference>
<dbReference type="Antibodypedia" id="328">
    <property type="antibodies" value="151 antibodies from 28 providers"/>
</dbReference>
<dbReference type="DNASU" id="29801"/>
<dbReference type="Ensembl" id="ENST00000320602.11">
    <molecule id="Q9ULC8-2"/>
    <property type="protein sequence ID" value="ENSP00000317804.7"/>
    <property type="gene ID" value="ENSG00000099904.16"/>
</dbReference>
<dbReference type="Ensembl" id="ENST00000334554.12">
    <molecule id="Q9ULC8-1"/>
    <property type="protein sequence ID" value="ENSP00000334490.7"/>
    <property type="gene ID" value="ENSG00000099904.16"/>
</dbReference>
<dbReference type="Ensembl" id="ENST00000405930.3">
    <molecule id="Q9ULC8-3"/>
    <property type="protein sequence ID" value="ENSP00000384716.3"/>
    <property type="gene ID" value="ENSG00000099904.16"/>
</dbReference>
<dbReference type="GeneID" id="29801"/>
<dbReference type="KEGG" id="hsa:29801"/>
<dbReference type="MANE-Select" id="ENST00000334554.12">
    <property type="protein sequence ID" value="ENSP00000334490.7"/>
    <property type="RefSeq nucleotide sequence ID" value="NM_013373.4"/>
    <property type="RefSeq protein sequence ID" value="NP_037505.1"/>
</dbReference>
<dbReference type="UCSC" id="uc002zrq.4">
    <molecule id="Q9ULC8-1"/>
    <property type="organism name" value="human"/>
</dbReference>
<dbReference type="AGR" id="HGNC:18474"/>
<dbReference type="CTD" id="29801"/>
<dbReference type="DisGeNET" id="29801"/>
<dbReference type="GeneCards" id="ZDHHC8"/>
<dbReference type="HGNC" id="HGNC:18474">
    <property type="gene designation" value="ZDHHC8"/>
</dbReference>
<dbReference type="HPA" id="ENSG00000099904">
    <property type="expression patterns" value="Low tissue specificity"/>
</dbReference>
<dbReference type="MalaCards" id="ZDHHC8"/>
<dbReference type="MIM" id="608784">
    <property type="type" value="gene"/>
</dbReference>
<dbReference type="neXtProt" id="NX_Q9ULC8"/>
<dbReference type="OpenTargets" id="ENSG00000099904"/>
<dbReference type="PharmGKB" id="PA38339"/>
<dbReference type="VEuPathDB" id="HostDB:ENSG00000099904"/>
<dbReference type="eggNOG" id="KOG1311">
    <property type="taxonomic scope" value="Eukaryota"/>
</dbReference>
<dbReference type="GeneTree" id="ENSGT00940000158044"/>
<dbReference type="HOGENOM" id="CLU_013779_1_0_1"/>
<dbReference type="InParanoid" id="Q9ULC8"/>
<dbReference type="OMA" id="CIAHAAV"/>
<dbReference type="OrthoDB" id="4096362at2759"/>
<dbReference type="PAN-GO" id="Q9ULC8">
    <property type="GO annotations" value="3 GO annotations based on evolutionary models"/>
</dbReference>
<dbReference type="PhylomeDB" id="Q9ULC8"/>
<dbReference type="TreeFam" id="TF354263"/>
<dbReference type="PathwayCommons" id="Q9ULC8"/>
<dbReference type="Reactome" id="R-HSA-8963896">
    <property type="pathway name" value="HDL assembly"/>
</dbReference>
<dbReference type="Reactome" id="R-HSA-9694548">
    <property type="pathway name" value="Maturation of spike protein"/>
</dbReference>
<dbReference type="SignaLink" id="Q9ULC8"/>
<dbReference type="BioGRID-ORCS" id="29801">
    <property type="hits" value="28 hits in 1159 CRISPR screens"/>
</dbReference>
<dbReference type="GeneWiki" id="ZDHHC8"/>
<dbReference type="GenomeRNAi" id="29801"/>
<dbReference type="Pharos" id="Q9ULC8">
    <property type="development level" value="Tbio"/>
</dbReference>
<dbReference type="PRO" id="PR:Q9ULC8"/>
<dbReference type="Proteomes" id="UP000005640">
    <property type="component" value="Chromosome 22"/>
</dbReference>
<dbReference type="RNAct" id="Q9ULC8">
    <property type="molecule type" value="protein"/>
</dbReference>
<dbReference type="Bgee" id="ENSG00000099904">
    <property type="expression patterns" value="Expressed in tibial nerve and 145 other cell types or tissues"/>
</dbReference>
<dbReference type="ExpressionAtlas" id="Q9ULC8">
    <property type="expression patterns" value="baseline and differential"/>
</dbReference>
<dbReference type="GO" id="GO:0005829">
    <property type="term" value="C:cytosol"/>
    <property type="evidence" value="ECO:0000304"/>
    <property type="project" value="Reactome"/>
</dbReference>
<dbReference type="GO" id="GO:0098978">
    <property type="term" value="C:glutamatergic synapse"/>
    <property type="evidence" value="ECO:0007669"/>
    <property type="project" value="Ensembl"/>
</dbReference>
<dbReference type="GO" id="GO:0005794">
    <property type="term" value="C:Golgi apparatus"/>
    <property type="evidence" value="ECO:0000314"/>
    <property type="project" value="UniProtKB"/>
</dbReference>
<dbReference type="GO" id="GO:0000139">
    <property type="term" value="C:Golgi membrane"/>
    <property type="evidence" value="ECO:0000304"/>
    <property type="project" value="Reactome"/>
</dbReference>
<dbReference type="GO" id="GO:0031966">
    <property type="term" value="C:mitochondrial membrane"/>
    <property type="evidence" value="ECO:0007669"/>
    <property type="project" value="UniProtKB-SubCell"/>
</dbReference>
<dbReference type="GO" id="GO:0098794">
    <property type="term" value="C:postsynapse"/>
    <property type="evidence" value="ECO:0007669"/>
    <property type="project" value="Ensembl"/>
</dbReference>
<dbReference type="GO" id="GO:0016409">
    <property type="term" value="F:palmitoyltransferase activity"/>
    <property type="evidence" value="ECO:0000314"/>
    <property type="project" value="UniProtKB"/>
</dbReference>
<dbReference type="GO" id="GO:0019706">
    <property type="term" value="F:protein-cysteine S-palmitoyltransferase activity"/>
    <property type="evidence" value="ECO:0000304"/>
    <property type="project" value="Reactome"/>
</dbReference>
<dbReference type="GO" id="GO:0034380">
    <property type="term" value="P:high-density lipoprotein particle assembly"/>
    <property type="evidence" value="ECO:0000304"/>
    <property type="project" value="Reactome"/>
</dbReference>
<dbReference type="GO" id="GO:0007626">
    <property type="term" value="P:locomotory behavior"/>
    <property type="evidence" value="ECO:0007669"/>
    <property type="project" value="Ensembl"/>
</dbReference>
<dbReference type="GO" id="GO:0018230">
    <property type="term" value="P:peptidyl-L-cysteine S-palmitoylation"/>
    <property type="evidence" value="ECO:0000314"/>
    <property type="project" value="UniProtKB"/>
</dbReference>
<dbReference type="GO" id="GO:0044794">
    <property type="term" value="P:positive regulation by host of viral process"/>
    <property type="evidence" value="ECO:0000314"/>
    <property type="project" value="UniProtKB"/>
</dbReference>
<dbReference type="GO" id="GO:0010875">
    <property type="term" value="P:positive regulation of cholesterol efflux"/>
    <property type="evidence" value="ECO:0000314"/>
    <property type="project" value="UniProtKB"/>
</dbReference>
<dbReference type="GO" id="GO:1903078">
    <property type="term" value="P:positive regulation of protein localization to plasma membrane"/>
    <property type="evidence" value="ECO:0000305"/>
    <property type="project" value="UniProtKB"/>
</dbReference>
<dbReference type="GO" id="GO:0018345">
    <property type="term" value="P:protein palmitoylation"/>
    <property type="evidence" value="ECO:0000314"/>
    <property type="project" value="UniProtKB"/>
</dbReference>
<dbReference type="GO" id="GO:0150052">
    <property type="term" value="P:regulation of postsynapse assembly"/>
    <property type="evidence" value="ECO:0007669"/>
    <property type="project" value="Ensembl"/>
</dbReference>
<dbReference type="InterPro" id="IPR001594">
    <property type="entry name" value="Palmitoyltrfase_DHHC"/>
</dbReference>
<dbReference type="PANTHER" id="PTHR12349">
    <property type="entry name" value="ANKYRIN REPEAT AND LEM DOMAIN-CONTAINING PROTEIN 2"/>
    <property type="match status" value="1"/>
</dbReference>
<dbReference type="PANTHER" id="PTHR12349:SF1">
    <property type="entry name" value="PALMITOYLTRANSFERASE ZDHHC8"/>
    <property type="match status" value="1"/>
</dbReference>
<dbReference type="Pfam" id="PF01529">
    <property type="entry name" value="DHHC"/>
    <property type="match status" value="1"/>
</dbReference>
<dbReference type="PROSITE" id="PS50216">
    <property type="entry name" value="DHHC"/>
    <property type="match status" value="1"/>
</dbReference>
<organism>
    <name type="scientific">Homo sapiens</name>
    <name type="common">Human</name>
    <dbReference type="NCBI Taxonomy" id="9606"/>
    <lineage>
        <taxon>Eukaryota</taxon>
        <taxon>Metazoa</taxon>
        <taxon>Chordata</taxon>
        <taxon>Craniata</taxon>
        <taxon>Vertebrata</taxon>
        <taxon>Euteleostomi</taxon>
        <taxon>Mammalia</taxon>
        <taxon>Eutheria</taxon>
        <taxon>Euarchontoglires</taxon>
        <taxon>Primates</taxon>
        <taxon>Haplorrhini</taxon>
        <taxon>Catarrhini</taxon>
        <taxon>Hominidae</taxon>
        <taxon>Homo</taxon>
    </lineage>
</organism>
<proteinExistence type="evidence at protein level"/>
<name>ZDHC8_HUMAN</name>
<gene>
    <name evidence="22" type="primary">ZDHHC8</name>
    <name evidence="21" type="synonym">KIAA1292</name>
    <name type="synonym">ZDHHCL1</name>
    <name type="synonym">ZNF378</name>
</gene>
<comment type="function">
    <text evidence="1 18 19 20">Palmitoyltransferase that catalyzes the addition of palmitate onto various protein substrates and therefore functions in several unrelated biological processes (Probable). Through the palmitoylation of ABCA1 regulates the localization of the transporter to the plasma membrane and thereby regulates its function in cholesterol and phospholipid efflux (Probable). Could also pamitoylate the D(2) dopamine receptor DRD2 and regulate its stability and localization to the plasma membrane (Probable). Could also play a role in glutamatergic transmission (By similarity).</text>
</comment>
<comment type="function">
    <text evidence="13">(Microbial infection) Able to palmitoylate SARS coronavirus-2/SARS-CoV-2 spike protein following its synthesis in the endoplasmic reticulum (ER). In the infected cell, promotes spike biogenesis by protecting it from premature ER degradation, increases half-life and controls the lipid organization of its immediate membrane environment. Once the virus has formed, spike palmitoylation controls fusion with the target cell.</text>
</comment>
<comment type="catalytic activity">
    <reaction evidence="13 18 19">
        <text>L-cysteinyl-[protein] + hexadecanoyl-CoA = S-hexadecanoyl-L-cysteinyl-[protein] + CoA</text>
        <dbReference type="Rhea" id="RHEA:36683"/>
        <dbReference type="Rhea" id="RHEA-COMP:10131"/>
        <dbReference type="Rhea" id="RHEA-COMP:11032"/>
        <dbReference type="ChEBI" id="CHEBI:29950"/>
        <dbReference type="ChEBI" id="CHEBI:57287"/>
        <dbReference type="ChEBI" id="CHEBI:57379"/>
        <dbReference type="ChEBI" id="CHEBI:74151"/>
        <dbReference type="EC" id="2.3.1.225"/>
    </reaction>
    <physiologicalReaction direction="left-to-right" evidence="18 19">
        <dbReference type="Rhea" id="RHEA:36684"/>
    </physiologicalReaction>
</comment>
<comment type="subcellular location">
    <subcellularLocation>
        <location evidence="11 12 13">Golgi apparatus membrane</location>
        <topology evidence="3">Multi-pass membrane protein</topology>
    </subcellularLocation>
    <subcellularLocation>
        <location evidence="1">Mitochondrion membrane</location>
        <topology evidence="3">Multi-pass membrane protein</topology>
    </subcellularLocation>
</comment>
<comment type="alternative products">
    <event type="alternative splicing"/>
    <isoform>
        <id>Q9ULC8-1</id>
        <name>1</name>
        <sequence type="displayed"/>
    </isoform>
    <isoform>
        <id>Q9ULC8-2</id>
        <name>2</name>
        <sequence type="described" ref="VSP_012572"/>
    </isoform>
    <isoform>
        <id>Q9ULC8-3</id>
        <name>3</name>
        <sequence type="described" ref="VSP_012573"/>
    </isoform>
</comment>
<comment type="tissue specificity">
    <text evidence="11">Widely expressed.</text>
</comment>
<comment type="domain">
    <text evidence="2">The DHHC domain is required for palmitoyltransferase activity.</text>
</comment>
<comment type="miscellaneous">
    <text evidence="6 7 8 9 10">According to initial studies, defects in ZDHHC8 may contribute to susceptibility to schizophrenia (PubMed:15184899, PubMed:15489219). However, additional studies could not confirm this (PubMed:15631889, PubMed:15992527, PubMed:16150541).</text>
</comment>
<comment type="similarity">
    <text evidence="17">Belongs to the DHHC palmitoyltransferase family. ERF2/ZDHHC9 subfamily.</text>
</comment>
<comment type="sequence caution" evidence="17">
    <conflict type="erroneous initiation">
        <sequence resource="EMBL-CDS" id="BAD18420"/>
    </conflict>
    <text>Truncated N-terminus.</text>
</comment>
<comment type="sequence caution" evidence="17">
    <conflict type="erroneous initiation">
        <sequence resource="EMBL-CDS" id="CAG30243"/>
    </conflict>
    <text>Truncated N-terminus.</text>
</comment>
<sequence>MPRSPGTRLKPAKYIPVATAAALLVGSSTLFFVFTCPWLTRAVSPAVPVYNGIIFLFVLANFSMATFMDPGVFPRADEDEDKEDDFRAPLYKNVDVRGIQVRMKWCATCHFYRPPRCSHCSVCDNCVEDFDHHCPWVNNCIGRRNYRYFFLFLLSLSAHMVGVVAFGLVYVLNHAEGLGAAHTTITMAVMCVAGLFFIPVIGLTGFHVVLVTRGRTTNEQVTGKFRGGVNPFTRGCCGNVEHVLCSPLAPRYVVEPPRLPLAVSLKPPFLRPELLDRAAPLKVKLSDNGLKAGLGRSKSKGSLDRLDEKPLDLGPPLPPKIEAGTFSSDLQTPRPGSAESALSVQRTSPPTPAMYKFRPAFPTGPKVPFCGPGEQVPGPDSLTLGDDSIRSLDFVSEPSLDLPDYGPGGLHAAYPPSPPLSASDAFSGALRSLSLKASSRRGGDHVALQPLRSEGGPPTPHRSIFAPHALPNRNGSLSYDSLLNPGSPGGHACPAHPAVGVAGYHSPYLHPGATGDPPRPLPRSFSPVLGPRPREPSPVRYDNLSRTIMASIQERKDREERERLLRSQADSLFGDSGVYDAPSSYSLQQASVLSEGPRGPALRYGSRDDLVAGPGFGGARNPALQTSLSSLSSSVSRAPRTSSSSLQADQASSNAPGPRPSSGSHRSPARQGLPSPPGTPHSPSYAGPKAVAFIHTDLPEPPPSLTVQRDHPQLKTPPSKLNGQSPGLARLGPATGPPGPSASPTRHTLVKKVSGVGGTTYEISV</sequence>
<feature type="chain" id="PRO_0000212877" description="Palmitoyltransferase ZDHHC8">
    <location>
        <begin position="1"/>
        <end position="765"/>
    </location>
</feature>
<feature type="topological domain" description="Cytoplasmic" evidence="3">
    <location>
        <begin position="1"/>
        <end position="13"/>
    </location>
</feature>
<feature type="transmembrane region" description="Helical" evidence="3">
    <location>
        <begin position="14"/>
        <end position="34"/>
    </location>
</feature>
<feature type="topological domain" description="Lumenal" evidence="3">
    <location>
        <begin position="35"/>
        <end position="52"/>
    </location>
</feature>
<feature type="transmembrane region" description="Helical" evidence="3">
    <location>
        <begin position="53"/>
        <end position="73"/>
    </location>
</feature>
<feature type="topological domain" description="Cytoplasmic" evidence="3">
    <location>
        <begin position="74"/>
        <end position="148"/>
    </location>
</feature>
<feature type="transmembrane region" description="Helical" evidence="3">
    <location>
        <begin position="149"/>
        <end position="169"/>
    </location>
</feature>
<feature type="topological domain" description="Lumenal" evidence="3">
    <location>
        <begin position="170"/>
        <end position="190"/>
    </location>
</feature>
<feature type="transmembrane region" description="Helical" evidence="3">
    <location>
        <begin position="191"/>
        <end position="211"/>
    </location>
</feature>
<feature type="topological domain" description="Cytoplasmic" evidence="3">
    <location>
        <begin position="212"/>
        <end position="765"/>
    </location>
</feature>
<feature type="domain" description="DHHC" evidence="4">
    <location>
        <begin position="104"/>
        <end position="154"/>
    </location>
</feature>
<feature type="region of interest" description="Disordered" evidence="5">
    <location>
        <begin position="293"/>
        <end position="352"/>
    </location>
</feature>
<feature type="region of interest" description="Disordered" evidence="5">
    <location>
        <begin position="509"/>
        <end position="540"/>
    </location>
</feature>
<feature type="region of interest" description="Disordered" evidence="5">
    <location>
        <begin position="613"/>
        <end position="747"/>
    </location>
</feature>
<feature type="compositionally biased region" description="Basic and acidic residues" evidence="5">
    <location>
        <begin position="301"/>
        <end position="311"/>
    </location>
</feature>
<feature type="compositionally biased region" description="Low complexity" evidence="5">
    <location>
        <begin position="622"/>
        <end position="653"/>
    </location>
</feature>
<feature type="active site" description="S-palmitoyl cysteine intermediate" evidence="4">
    <location>
        <position position="134"/>
    </location>
</feature>
<feature type="modified residue" description="Phosphoserine" evidence="1">
    <location>
        <position position="337"/>
    </location>
</feature>
<feature type="modified residue" description="Omega-N-methylarginine" evidence="1">
    <location>
        <position position="441"/>
    </location>
</feature>
<feature type="modified residue" description="Phosphoserine" evidence="23">
    <location>
        <position position="606"/>
    </location>
</feature>
<feature type="modified residue" description="Phosphoserine" evidence="1">
    <location>
        <position position="627"/>
    </location>
</feature>
<feature type="modified residue" description="Phosphoserine" evidence="23">
    <location>
        <position position="675"/>
    </location>
</feature>
<feature type="modified residue" description="Phosphoserine" evidence="23">
    <location>
        <position position="682"/>
    </location>
</feature>
<feature type="modified residue" description="Phosphoserine" evidence="23">
    <location>
        <position position="725"/>
    </location>
</feature>
<feature type="modified residue" description="Phosphoserine" evidence="23">
    <location>
        <position position="743"/>
    </location>
</feature>
<feature type="splice variant" id="VSP_012572" description="In isoform 2." evidence="14">
    <location>
        <begin position="129"/>
        <end position="220"/>
    </location>
</feature>
<feature type="splice variant" id="VSP_012573" description="In isoform 3." evidence="15">
    <original>DHPQLKTPPSKLNGQSPGLARLGPATGPPGPSASPTRHTLVKKVSGVGGTTYEISV</original>
    <variation>GRIGTCTRGWGRRGQPWVPPGLHLCHLGRPEDRPPLRAPWSQAAGAPPRGAMCRLHLAASSLFPSLSGP</variation>
    <location>
        <begin position="710"/>
        <end position="765"/>
    </location>
</feature>
<protein>
    <recommendedName>
        <fullName evidence="17">Palmitoyltransferase ZDHHC8</fullName>
        <ecNumber evidence="18 19">2.3.1.225</ecNumber>
    </recommendedName>
    <alternativeName>
        <fullName evidence="22">Zinc finger DHHC domain-containing protein 8</fullName>
        <shortName evidence="16">DHHC-8</shortName>
    </alternativeName>
    <alternativeName>
        <fullName>Zinc finger protein 378</fullName>
    </alternativeName>
</protein>
<accession>Q9ULC8</accession>
<accession>Q2TGE9</accession>
<accession>Q6ICL1</accession>
<accession>Q6ZNF5</accession>
<accession>Q7Z6L9</accession>